<accession>Q8SVF2</accession>
<proteinExistence type="inferred from homology"/>
<protein>
    <recommendedName>
        <fullName>UPF0328 protein ECU06_0100</fullName>
    </recommendedName>
</protein>
<feature type="chain" id="PRO_0000223132" description="UPF0328 protein ECU06_0100">
    <location>
        <begin position="1"/>
        <end position="261"/>
    </location>
</feature>
<keyword id="KW-1185">Reference proteome</keyword>
<evidence type="ECO:0000305" key="1"/>
<sequence>MKISEPPAISKPTRDESELIRMYLKTIICDFKAPMLIAFPILMGLMLKETVKSSLFLRFIIMLLPFSYSALECFLLFRNNLESSYRSELHKMPYSIFNVLLIAFSVISILSIAIFPLSTWSNNDVSSYSMLLPCLIVPLTYMLSISCSLVSGSILFTDTGIDILIDASLLLCTLLLLVFWIIESKYFPYFVFASLILVLIRSFRTRHAPSKENSLPVTAWRVVVFGSILVLSIVIYGSIAYELLDPIHQGWKTIERRIHHL</sequence>
<dbReference type="EMBL" id="AL590446">
    <property type="protein sequence ID" value="CAD25370.1"/>
    <property type="molecule type" value="Genomic_DNA"/>
</dbReference>
<dbReference type="RefSeq" id="NP_585766.1">
    <property type="nucleotide sequence ID" value="NM_001041388.1"/>
</dbReference>
<dbReference type="GeneID" id="859189"/>
<dbReference type="KEGG" id="ecu:ECU06_0100"/>
<dbReference type="VEuPathDB" id="MicrosporidiaDB:ECU06_0100"/>
<dbReference type="HOGENOM" id="CLU_059413_0_0_1"/>
<dbReference type="InParanoid" id="Q8SVF2"/>
<dbReference type="Proteomes" id="UP000000819">
    <property type="component" value="Chromosome VI"/>
</dbReference>
<dbReference type="InterPro" id="IPR019081">
    <property type="entry name" value="UPF0328"/>
</dbReference>
<dbReference type="Pfam" id="PF09591">
    <property type="entry name" value="DUF2463"/>
    <property type="match status" value="1"/>
</dbReference>
<reference key="1">
    <citation type="journal article" date="2001" name="Nature">
        <title>Genome sequence and gene compaction of the eukaryote parasite Encephalitozoon cuniculi.</title>
        <authorList>
            <person name="Katinka M.D."/>
            <person name="Duprat S."/>
            <person name="Cornillot E."/>
            <person name="Metenier G."/>
            <person name="Thomarat F."/>
            <person name="Prensier G."/>
            <person name="Barbe V."/>
            <person name="Peyretaillade E."/>
            <person name="Brottier P."/>
            <person name="Wincker P."/>
            <person name="Delbac F."/>
            <person name="El Alaoui H."/>
            <person name="Peyret P."/>
            <person name="Saurin W."/>
            <person name="Gouy M."/>
            <person name="Weissenbach J."/>
            <person name="Vivares C.P."/>
        </authorList>
    </citation>
    <scope>NUCLEOTIDE SEQUENCE [LARGE SCALE GENOMIC DNA]</scope>
    <source>
        <strain>GB-M1</strain>
    </source>
</reference>
<organism>
    <name type="scientific">Encephalitozoon cuniculi (strain GB-M1)</name>
    <name type="common">Microsporidian parasite</name>
    <dbReference type="NCBI Taxonomy" id="284813"/>
    <lineage>
        <taxon>Eukaryota</taxon>
        <taxon>Fungi</taxon>
        <taxon>Fungi incertae sedis</taxon>
        <taxon>Microsporidia</taxon>
        <taxon>Unikaryonidae</taxon>
        <taxon>Encephalitozoon</taxon>
    </lineage>
</organism>
<name>Y610_ENCCU</name>
<gene>
    <name type="ordered locus">ECU06_0100</name>
</gene>
<comment type="similarity">
    <text evidence="1">Belongs to the UPF0328 family.</text>
</comment>